<keyword id="KW-1185">Reference proteome</keyword>
<keyword id="KW-0687">Ribonucleoprotein</keyword>
<keyword id="KW-0689">Ribosomal protein</keyword>
<gene>
    <name evidence="1" type="primary">rpmD</name>
    <name type="ordered locus">Rxyl_2137</name>
</gene>
<accession>Q1AU47</accession>
<dbReference type="EMBL" id="CP000386">
    <property type="protein sequence ID" value="ABG05081.1"/>
    <property type="molecule type" value="Genomic_DNA"/>
</dbReference>
<dbReference type="RefSeq" id="WP_011565096.1">
    <property type="nucleotide sequence ID" value="NC_008148.1"/>
</dbReference>
<dbReference type="SMR" id="Q1AU47"/>
<dbReference type="STRING" id="266117.Rxyl_2137"/>
<dbReference type="KEGG" id="rxy:Rxyl_2137"/>
<dbReference type="eggNOG" id="COG1841">
    <property type="taxonomic scope" value="Bacteria"/>
</dbReference>
<dbReference type="HOGENOM" id="CLU_131047_2_1_11"/>
<dbReference type="OrthoDB" id="9812790at2"/>
<dbReference type="PhylomeDB" id="Q1AU47"/>
<dbReference type="Proteomes" id="UP000006637">
    <property type="component" value="Chromosome"/>
</dbReference>
<dbReference type="GO" id="GO:0022625">
    <property type="term" value="C:cytosolic large ribosomal subunit"/>
    <property type="evidence" value="ECO:0007669"/>
    <property type="project" value="TreeGrafter"/>
</dbReference>
<dbReference type="GO" id="GO:0003735">
    <property type="term" value="F:structural constituent of ribosome"/>
    <property type="evidence" value="ECO:0007669"/>
    <property type="project" value="InterPro"/>
</dbReference>
<dbReference type="GO" id="GO:0006412">
    <property type="term" value="P:translation"/>
    <property type="evidence" value="ECO:0007669"/>
    <property type="project" value="UniProtKB-UniRule"/>
</dbReference>
<dbReference type="CDD" id="cd01658">
    <property type="entry name" value="Ribosomal_L30"/>
    <property type="match status" value="1"/>
</dbReference>
<dbReference type="FunFam" id="3.30.1390.20:FF:000001">
    <property type="entry name" value="50S ribosomal protein L30"/>
    <property type="match status" value="1"/>
</dbReference>
<dbReference type="Gene3D" id="3.30.1390.20">
    <property type="entry name" value="Ribosomal protein L30, ferredoxin-like fold domain"/>
    <property type="match status" value="1"/>
</dbReference>
<dbReference type="HAMAP" id="MF_01371_B">
    <property type="entry name" value="Ribosomal_uL30_B"/>
    <property type="match status" value="1"/>
</dbReference>
<dbReference type="InterPro" id="IPR036919">
    <property type="entry name" value="Ribo_uL30_ferredoxin-like_sf"/>
</dbReference>
<dbReference type="InterPro" id="IPR005996">
    <property type="entry name" value="Ribosomal_uL30_bac-type"/>
</dbReference>
<dbReference type="InterPro" id="IPR016082">
    <property type="entry name" value="Ribosomal_uL30_ferredoxin-like"/>
</dbReference>
<dbReference type="NCBIfam" id="TIGR01308">
    <property type="entry name" value="rpmD_bact"/>
    <property type="match status" value="1"/>
</dbReference>
<dbReference type="PANTHER" id="PTHR15892:SF2">
    <property type="entry name" value="LARGE RIBOSOMAL SUBUNIT PROTEIN UL30M"/>
    <property type="match status" value="1"/>
</dbReference>
<dbReference type="PANTHER" id="PTHR15892">
    <property type="entry name" value="MITOCHONDRIAL RIBOSOMAL PROTEIN L30"/>
    <property type="match status" value="1"/>
</dbReference>
<dbReference type="Pfam" id="PF00327">
    <property type="entry name" value="Ribosomal_L30"/>
    <property type="match status" value="1"/>
</dbReference>
<dbReference type="PIRSF" id="PIRSF002211">
    <property type="entry name" value="Ribosomal_L30_bac-type"/>
    <property type="match status" value="1"/>
</dbReference>
<dbReference type="SUPFAM" id="SSF55129">
    <property type="entry name" value="Ribosomal protein L30p/L7e"/>
    <property type="match status" value="1"/>
</dbReference>
<organism>
    <name type="scientific">Rubrobacter xylanophilus (strain DSM 9941 / JCM 11954 / NBRC 16129 / PRD-1)</name>
    <dbReference type="NCBI Taxonomy" id="266117"/>
    <lineage>
        <taxon>Bacteria</taxon>
        <taxon>Bacillati</taxon>
        <taxon>Actinomycetota</taxon>
        <taxon>Rubrobacteria</taxon>
        <taxon>Rubrobacterales</taxon>
        <taxon>Rubrobacteraceae</taxon>
        <taxon>Rubrobacter</taxon>
    </lineage>
</organism>
<feature type="chain" id="PRO_0000273845" description="Large ribosomal subunit protein uL30">
    <location>
        <begin position="1"/>
        <end position="61"/>
    </location>
</feature>
<reference key="1">
    <citation type="submission" date="2006-06" db="EMBL/GenBank/DDBJ databases">
        <title>Complete sequence of Rubrobacter xylanophilus DSM 9941.</title>
        <authorList>
            <consortium name="US DOE Joint Genome Institute"/>
            <person name="Copeland A."/>
            <person name="Lucas S."/>
            <person name="Lapidus A."/>
            <person name="Barry K."/>
            <person name="Detter J.C."/>
            <person name="Glavina del Rio T."/>
            <person name="Hammon N."/>
            <person name="Israni S."/>
            <person name="Dalin E."/>
            <person name="Tice H."/>
            <person name="Pitluck S."/>
            <person name="Munk A.C."/>
            <person name="Brettin T."/>
            <person name="Bruce D."/>
            <person name="Han C."/>
            <person name="Tapia R."/>
            <person name="Gilna P."/>
            <person name="Schmutz J."/>
            <person name="Larimer F."/>
            <person name="Land M."/>
            <person name="Hauser L."/>
            <person name="Kyrpides N."/>
            <person name="Lykidis A."/>
            <person name="da Costa M.S."/>
            <person name="Rainey F.A."/>
            <person name="Empadinhas N."/>
            <person name="Jolivet E."/>
            <person name="Battista J.R."/>
            <person name="Richardson P."/>
        </authorList>
    </citation>
    <scope>NUCLEOTIDE SEQUENCE [LARGE SCALE GENOMIC DNA]</scope>
    <source>
        <strain>DSM 9941 / JCM 11954 / NBRC 16129 / PRD-1</strain>
    </source>
</reference>
<evidence type="ECO:0000255" key="1">
    <source>
        <dbReference type="HAMAP-Rule" id="MF_01371"/>
    </source>
</evidence>
<evidence type="ECO:0000305" key="2"/>
<name>RL30_RUBXD</name>
<protein>
    <recommendedName>
        <fullName evidence="1">Large ribosomal subunit protein uL30</fullName>
    </recommendedName>
    <alternativeName>
        <fullName evidence="2">50S ribosomal protein L30</fullName>
    </alternativeName>
</protein>
<comment type="subunit">
    <text evidence="1">Part of the 50S ribosomal subunit.</text>
</comment>
<comment type="similarity">
    <text evidence="1">Belongs to the universal ribosomal protein uL30 family.</text>
</comment>
<sequence length="61" mass="7155">MSQLRVTQVRSTIGAIEKHKRTVRALGLRRIRDSRVHRDTPQIRGMIAKVRHLVRVEEVED</sequence>
<proteinExistence type="inferred from homology"/>